<comment type="similarity">
    <text evidence="2">Belongs to the bacterial ribosomal protein bS21 family.</text>
</comment>
<gene>
    <name type="primary">rpsU</name>
</gene>
<keyword id="KW-0687">Ribonucleoprotein</keyword>
<keyword id="KW-0689">Ribosomal protein</keyword>
<sequence>MPGIRVKEGESIESALKRFKKATEKAGILSEIRKREHYEKPSVKRKKKALAAKKRAVKKARKSF</sequence>
<protein>
    <recommendedName>
        <fullName evidence="2">Small ribosomal subunit protein bS21</fullName>
    </recommendedName>
    <alternativeName>
        <fullName>30S ribosomal protein S21</fullName>
    </alternativeName>
</protein>
<dbReference type="EMBL" id="U20669">
    <property type="protein sequence ID" value="AAB60205.1"/>
    <property type="molecule type" value="Genomic_DNA"/>
</dbReference>
<dbReference type="PIR" id="S70831">
    <property type="entry name" value="S70831"/>
</dbReference>
<dbReference type="RefSeq" id="WP_002614080.1">
    <property type="nucleotide sequence ID" value="NZ_JABFNT010000148.1"/>
</dbReference>
<dbReference type="SMR" id="P49225"/>
<dbReference type="GeneID" id="41362483"/>
<dbReference type="OMA" id="HQHFEKP"/>
<dbReference type="GO" id="GO:1990904">
    <property type="term" value="C:ribonucleoprotein complex"/>
    <property type="evidence" value="ECO:0007669"/>
    <property type="project" value="UniProtKB-KW"/>
</dbReference>
<dbReference type="GO" id="GO:0005840">
    <property type="term" value="C:ribosome"/>
    <property type="evidence" value="ECO:0007669"/>
    <property type="project" value="UniProtKB-KW"/>
</dbReference>
<dbReference type="GO" id="GO:0003735">
    <property type="term" value="F:structural constituent of ribosome"/>
    <property type="evidence" value="ECO:0007669"/>
    <property type="project" value="InterPro"/>
</dbReference>
<dbReference type="GO" id="GO:0006412">
    <property type="term" value="P:translation"/>
    <property type="evidence" value="ECO:0007669"/>
    <property type="project" value="UniProtKB-UniRule"/>
</dbReference>
<dbReference type="Gene3D" id="1.20.5.1150">
    <property type="entry name" value="Ribosomal protein S8"/>
    <property type="match status" value="1"/>
</dbReference>
<dbReference type="HAMAP" id="MF_00358">
    <property type="entry name" value="Ribosomal_bS21"/>
    <property type="match status" value="1"/>
</dbReference>
<dbReference type="InterPro" id="IPR001911">
    <property type="entry name" value="Ribosomal_bS21"/>
</dbReference>
<dbReference type="InterPro" id="IPR018278">
    <property type="entry name" value="Ribosomal_bS21_CS"/>
</dbReference>
<dbReference type="InterPro" id="IPR038380">
    <property type="entry name" value="Ribosomal_bS21_sf"/>
</dbReference>
<dbReference type="NCBIfam" id="TIGR00030">
    <property type="entry name" value="S21p"/>
    <property type="match status" value="1"/>
</dbReference>
<dbReference type="PANTHER" id="PTHR21109">
    <property type="entry name" value="MITOCHONDRIAL 28S RIBOSOMAL PROTEIN S21"/>
    <property type="match status" value="1"/>
</dbReference>
<dbReference type="PANTHER" id="PTHR21109:SF22">
    <property type="entry name" value="SMALL RIBOSOMAL SUBUNIT PROTEIN BS21"/>
    <property type="match status" value="1"/>
</dbReference>
<dbReference type="Pfam" id="PF01165">
    <property type="entry name" value="Ribosomal_S21"/>
    <property type="match status" value="1"/>
</dbReference>
<dbReference type="PRINTS" id="PR00976">
    <property type="entry name" value="RIBOSOMALS21"/>
</dbReference>
<dbReference type="PROSITE" id="PS01181">
    <property type="entry name" value="RIBOSOMAL_S21"/>
    <property type="match status" value="1"/>
</dbReference>
<name>RS21_MYXXA</name>
<feature type="chain" id="PRO_0000178354" description="Small ribosomal subunit protein bS21">
    <location>
        <begin position="1"/>
        <end position="64"/>
    </location>
</feature>
<feature type="region of interest" description="Disordered" evidence="1">
    <location>
        <begin position="39"/>
        <end position="64"/>
    </location>
</feature>
<feature type="compositionally biased region" description="Basic residues" evidence="1">
    <location>
        <begin position="43"/>
        <end position="64"/>
    </location>
</feature>
<evidence type="ECO:0000256" key="1">
    <source>
        <dbReference type="SAM" id="MobiDB-lite"/>
    </source>
</evidence>
<evidence type="ECO:0000305" key="2"/>
<organism>
    <name type="scientific">Myxococcus xanthus</name>
    <dbReference type="NCBI Taxonomy" id="34"/>
    <lineage>
        <taxon>Bacteria</taxon>
        <taxon>Pseudomonadati</taxon>
        <taxon>Myxococcota</taxon>
        <taxon>Myxococcia</taxon>
        <taxon>Myxococcales</taxon>
        <taxon>Cystobacterineae</taxon>
        <taxon>Myxococcaceae</taxon>
        <taxon>Myxococcus</taxon>
    </lineage>
</organism>
<accession>P49225</accession>
<proteinExistence type="inferred from homology"/>
<reference key="1">
    <citation type="journal article" date="1995" name="Mol. Microbiol.">
        <title>A missense mutation in rpoD results in an A-signalling defect in Myxococcus xanthus.</title>
        <authorList>
            <person name="Davis J.M."/>
            <person name="Mayor J."/>
            <person name="Plamann L."/>
        </authorList>
    </citation>
    <scope>NUCLEOTIDE SEQUENCE [GENOMIC DNA]</scope>
    <source>
        <strain>DK5060</strain>
    </source>
</reference>